<feature type="chain" id="PRO_1000201111" description="Phosphoglucosamine mutase">
    <location>
        <begin position="1"/>
        <end position="451"/>
    </location>
</feature>
<feature type="active site" description="Phosphoserine intermediate" evidence="1">
    <location>
        <position position="104"/>
    </location>
</feature>
<feature type="binding site" description="via phosphate group" evidence="1">
    <location>
        <position position="104"/>
    </location>
    <ligand>
        <name>Mg(2+)</name>
        <dbReference type="ChEBI" id="CHEBI:18420"/>
    </ligand>
</feature>
<feature type="binding site" evidence="1">
    <location>
        <position position="242"/>
    </location>
    <ligand>
        <name>Mg(2+)</name>
        <dbReference type="ChEBI" id="CHEBI:18420"/>
    </ligand>
</feature>
<feature type="binding site" evidence="1">
    <location>
        <position position="244"/>
    </location>
    <ligand>
        <name>Mg(2+)</name>
        <dbReference type="ChEBI" id="CHEBI:18420"/>
    </ligand>
</feature>
<feature type="binding site" evidence="1">
    <location>
        <position position="246"/>
    </location>
    <ligand>
        <name>Mg(2+)</name>
        <dbReference type="ChEBI" id="CHEBI:18420"/>
    </ligand>
</feature>
<feature type="modified residue" description="Phosphoserine" evidence="1">
    <location>
        <position position="104"/>
    </location>
</feature>
<accession>B2GJ26</accession>
<proteinExistence type="inferred from homology"/>
<sequence length="451" mass="46962">MSRIFGTDGVRGLANGLLTAELAMELSQAAAIVLGHRHAPEGQRPTAVVARDGRASGEFIGAAVTAGLASSGVDVYDAGVLPTPAAAYLVGDIDADFGVMISASHNPAPDNGIKFLAHGGKKLPDAVEDTIQQVYEAKDFVRPTGAEVGRVTRLSDAEDRYILHLVGAIPHRLDGLSIVLDCANGAASGASPDAFRDAGATVHVIGAEPDGLNINDGVGSTHLGPLKQAVRELGADLGIAHDGDADRCLAVDHTGTEVDGDQIMCILAVAMKEAGRLNQDTLVATVMSNLGLQLALDEAGITLVRASVGDRYVLESMVANGYNLGGEQSGHVIMADYATTGDGLLTGLMLASRVAQTGMPLQELARTMTRMPQVMINVKNVDKAAAKTSEPVLEAVARTEERLGAEGRVLLRPSGTEPVVRVMVEAATHEDARREAEQLVSAVEEHLSLQS</sequence>
<protein>
    <recommendedName>
        <fullName evidence="1">Phosphoglucosamine mutase</fullName>
        <ecNumber evidence="1">5.4.2.10</ecNumber>
    </recommendedName>
</protein>
<gene>
    <name evidence="1" type="primary">glmM</name>
    <name type="ordered locus">KRH_06490</name>
</gene>
<reference key="1">
    <citation type="journal article" date="2008" name="J. Bacteriol.">
        <title>Complete genome sequence of the soil actinomycete Kocuria rhizophila.</title>
        <authorList>
            <person name="Takarada H."/>
            <person name="Sekine M."/>
            <person name="Kosugi H."/>
            <person name="Matsuo Y."/>
            <person name="Fujisawa T."/>
            <person name="Omata S."/>
            <person name="Kishi E."/>
            <person name="Shimizu A."/>
            <person name="Tsukatani N."/>
            <person name="Tanikawa S."/>
            <person name="Fujita N."/>
            <person name="Harayama S."/>
        </authorList>
    </citation>
    <scope>NUCLEOTIDE SEQUENCE [LARGE SCALE GENOMIC DNA]</scope>
    <source>
        <strain>ATCC 9341 / DSM 348 / NBRC 103217 / DC2201</strain>
    </source>
</reference>
<dbReference type="EC" id="5.4.2.10" evidence="1"/>
<dbReference type="EMBL" id="AP009152">
    <property type="protein sequence ID" value="BAG28996.1"/>
    <property type="molecule type" value="Genomic_DNA"/>
</dbReference>
<dbReference type="RefSeq" id="WP_012397721.1">
    <property type="nucleotide sequence ID" value="NZ_VECX01000001.1"/>
</dbReference>
<dbReference type="SMR" id="B2GJ26"/>
<dbReference type="STRING" id="378753.KRH_06490"/>
<dbReference type="KEGG" id="krh:KRH_06490"/>
<dbReference type="eggNOG" id="COG1109">
    <property type="taxonomic scope" value="Bacteria"/>
</dbReference>
<dbReference type="HOGENOM" id="CLU_016950_7_0_11"/>
<dbReference type="OrthoDB" id="9803322at2"/>
<dbReference type="Proteomes" id="UP000008838">
    <property type="component" value="Chromosome"/>
</dbReference>
<dbReference type="GO" id="GO:0005829">
    <property type="term" value="C:cytosol"/>
    <property type="evidence" value="ECO:0007669"/>
    <property type="project" value="TreeGrafter"/>
</dbReference>
<dbReference type="GO" id="GO:0000287">
    <property type="term" value="F:magnesium ion binding"/>
    <property type="evidence" value="ECO:0007669"/>
    <property type="project" value="UniProtKB-UniRule"/>
</dbReference>
<dbReference type="GO" id="GO:0008966">
    <property type="term" value="F:phosphoglucosamine mutase activity"/>
    <property type="evidence" value="ECO:0007669"/>
    <property type="project" value="UniProtKB-UniRule"/>
</dbReference>
<dbReference type="GO" id="GO:0004615">
    <property type="term" value="F:phosphomannomutase activity"/>
    <property type="evidence" value="ECO:0007669"/>
    <property type="project" value="TreeGrafter"/>
</dbReference>
<dbReference type="GO" id="GO:0005975">
    <property type="term" value="P:carbohydrate metabolic process"/>
    <property type="evidence" value="ECO:0007669"/>
    <property type="project" value="InterPro"/>
</dbReference>
<dbReference type="GO" id="GO:0009252">
    <property type="term" value="P:peptidoglycan biosynthetic process"/>
    <property type="evidence" value="ECO:0007669"/>
    <property type="project" value="TreeGrafter"/>
</dbReference>
<dbReference type="GO" id="GO:0006048">
    <property type="term" value="P:UDP-N-acetylglucosamine biosynthetic process"/>
    <property type="evidence" value="ECO:0007669"/>
    <property type="project" value="TreeGrafter"/>
</dbReference>
<dbReference type="CDD" id="cd05802">
    <property type="entry name" value="GlmM"/>
    <property type="match status" value="1"/>
</dbReference>
<dbReference type="FunFam" id="3.30.310.50:FF:000001">
    <property type="entry name" value="Phosphoglucosamine mutase"/>
    <property type="match status" value="1"/>
</dbReference>
<dbReference type="FunFam" id="3.40.120.10:FF:000001">
    <property type="entry name" value="Phosphoglucosamine mutase"/>
    <property type="match status" value="1"/>
</dbReference>
<dbReference type="FunFam" id="3.40.120.10:FF:000002">
    <property type="entry name" value="Phosphoglucosamine mutase"/>
    <property type="match status" value="1"/>
</dbReference>
<dbReference type="Gene3D" id="3.40.120.10">
    <property type="entry name" value="Alpha-D-Glucose-1,6-Bisphosphate, subunit A, domain 3"/>
    <property type="match status" value="3"/>
</dbReference>
<dbReference type="Gene3D" id="3.30.310.50">
    <property type="entry name" value="Alpha-D-phosphohexomutase, C-terminal domain"/>
    <property type="match status" value="1"/>
</dbReference>
<dbReference type="HAMAP" id="MF_01554_B">
    <property type="entry name" value="GlmM_B"/>
    <property type="match status" value="1"/>
</dbReference>
<dbReference type="InterPro" id="IPR005844">
    <property type="entry name" value="A-D-PHexomutase_a/b/a-I"/>
</dbReference>
<dbReference type="InterPro" id="IPR016055">
    <property type="entry name" value="A-D-PHexomutase_a/b/a-I/II/III"/>
</dbReference>
<dbReference type="InterPro" id="IPR005845">
    <property type="entry name" value="A-D-PHexomutase_a/b/a-II"/>
</dbReference>
<dbReference type="InterPro" id="IPR005846">
    <property type="entry name" value="A-D-PHexomutase_a/b/a-III"/>
</dbReference>
<dbReference type="InterPro" id="IPR005843">
    <property type="entry name" value="A-D-PHexomutase_C"/>
</dbReference>
<dbReference type="InterPro" id="IPR036900">
    <property type="entry name" value="A-D-PHexomutase_C_sf"/>
</dbReference>
<dbReference type="InterPro" id="IPR016066">
    <property type="entry name" value="A-D-PHexomutase_CS"/>
</dbReference>
<dbReference type="InterPro" id="IPR005841">
    <property type="entry name" value="Alpha-D-phosphohexomutase_SF"/>
</dbReference>
<dbReference type="InterPro" id="IPR006352">
    <property type="entry name" value="GlmM_bact"/>
</dbReference>
<dbReference type="InterPro" id="IPR050060">
    <property type="entry name" value="Phosphoglucosamine_mutase"/>
</dbReference>
<dbReference type="NCBIfam" id="TIGR01455">
    <property type="entry name" value="glmM"/>
    <property type="match status" value="1"/>
</dbReference>
<dbReference type="PANTHER" id="PTHR42946:SF1">
    <property type="entry name" value="PHOSPHOGLUCOMUTASE (ALPHA-D-GLUCOSE-1,6-BISPHOSPHATE-DEPENDENT)"/>
    <property type="match status" value="1"/>
</dbReference>
<dbReference type="PANTHER" id="PTHR42946">
    <property type="entry name" value="PHOSPHOHEXOSE MUTASE"/>
    <property type="match status" value="1"/>
</dbReference>
<dbReference type="Pfam" id="PF02878">
    <property type="entry name" value="PGM_PMM_I"/>
    <property type="match status" value="1"/>
</dbReference>
<dbReference type="Pfam" id="PF02879">
    <property type="entry name" value="PGM_PMM_II"/>
    <property type="match status" value="1"/>
</dbReference>
<dbReference type="Pfam" id="PF02880">
    <property type="entry name" value="PGM_PMM_III"/>
    <property type="match status" value="1"/>
</dbReference>
<dbReference type="Pfam" id="PF00408">
    <property type="entry name" value="PGM_PMM_IV"/>
    <property type="match status" value="1"/>
</dbReference>
<dbReference type="PRINTS" id="PR00509">
    <property type="entry name" value="PGMPMM"/>
</dbReference>
<dbReference type="SUPFAM" id="SSF55957">
    <property type="entry name" value="Phosphoglucomutase, C-terminal domain"/>
    <property type="match status" value="1"/>
</dbReference>
<dbReference type="SUPFAM" id="SSF53738">
    <property type="entry name" value="Phosphoglucomutase, first 3 domains"/>
    <property type="match status" value="3"/>
</dbReference>
<dbReference type="PROSITE" id="PS00710">
    <property type="entry name" value="PGM_PMM"/>
    <property type="match status" value="1"/>
</dbReference>
<organism>
    <name type="scientific">Kocuria rhizophila (strain ATCC 9341 / DSM 348 / NBRC 103217 / DC2201)</name>
    <dbReference type="NCBI Taxonomy" id="378753"/>
    <lineage>
        <taxon>Bacteria</taxon>
        <taxon>Bacillati</taxon>
        <taxon>Actinomycetota</taxon>
        <taxon>Actinomycetes</taxon>
        <taxon>Micrococcales</taxon>
        <taxon>Micrococcaceae</taxon>
        <taxon>Kocuria</taxon>
    </lineage>
</organism>
<keyword id="KW-0413">Isomerase</keyword>
<keyword id="KW-0460">Magnesium</keyword>
<keyword id="KW-0479">Metal-binding</keyword>
<keyword id="KW-0597">Phosphoprotein</keyword>
<keyword id="KW-1185">Reference proteome</keyword>
<comment type="function">
    <text evidence="1">Catalyzes the conversion of glucosamine-6-phosphate to glucosamine-1-phosphate.</text>
</comment>
<comment type="catalytic activity">
    <reaction evidence="1">
        <text>alpha-D-glucosamine 1-phosphate = D-glucosamine 6-phosphate</text>
        <dbReference type="Rhea" id="RHEA:23424"/>
        <dbReference type="ChEBI" id="CHEBI:58516"/>
        <dbReference type="ChEBI" id="CHEBI:58725"/>
        <dbReference type="EC" id="5.4.2.10"/>
    </reaction>
</comment>
<comment type="cofactor">
    <cofactor evidence="1">
        <name>Mg(2+)</name>
        <dbReference type="ChEBI" id="CHEBI:18420"/>
    </cofactor>
    <text evidence="1">Binds 1 Mg(2+) ion per subunit.</text>
</comment>
<comment type="PTM">
    <text evidence="1">Activated by phosphorylation.</text>
</comment>
<comment type="similarity">
    <text evidence="1">Belongs to the phosphohexose mutase family.</text>
</comment>
<name>GLMM_KOCRD</name>
<evidence type="ECO:0000255" key="1">
    <source>
        <dbReference type="HAMAP-Rule" id="MF_01554"/>
    </source>
</evidence>